<evidence type="ECO:0000250" key="1">
    <source>
        <dbReference type="UniProtKB" id="Q15041"/>
    </source>
</evidence>
<evidence type="ECO:0000255" key="2"/>
<evidence type="ECO:0000269" key="3">
    <source>
    </source>
</evidence>
<evidence type="ECO:0000269" key="4">
    <source>
    </source>
</evidence>
<evidence type="ECO:0000269" key="5">
    <source>
    </source>
</evidence>
<evidence type="ECO:0000305" key="6"/>
<gene>
    <name type="primary">Arl6ip1</name>
    <name type="synonym">Arl6ip</name>
</gene>
<dbReference type="EMBL" id="AF133669">
    <property type="protein sequence ID" value="AAD33046.1"/>
    <property type="status" value="ALT_FRAME"/>
    <property type="molecule type" value="mRNA"/>
</dbReference>
<dbReference type="EMBL" id="AF172088">
    <property type="protein sequence ID" value="AAF27313.1"/>
    <property type="status" value="ALT_INIT"/>
    <property type="molecule type" value="mRNA"/>
</dbReference>
<dbReference type="EMBL" id="AF223953">
    <property type="protein sequence ID" value="AAF34706.1"/>
    <property type="molecule type" value="mRNA"/>
</dbReference>
<dbReference type="EMBL" id="BC010196">
    <property type="protein sequence ID" value="AAH10196.1"/>
    <property type="molecule type" value="mRNA"/>
</dbReference>
<dbReference type="CCDS" id="CCDS21769.1"/>
<dbReference type="RefSeq" id="NP_062292.1">
    <property type="nucleotide sequence ID" value="NM_019419.2"/>
</dbReference>
<dbReference type="BioGRID" id="207603">
    <property type="interactions" value="4"/>
</dbReference>
<dbReference type="FunCoup" id="Q9JKW0">
    <property type="interactions" value="2955"/>
</dbReference>
<dbReference type="STRING" id="10090.ENSMUSP00000032888"/>
<dbReference type="iPTMnet" id="Q9JKW0"/>
<dbReference type="PhosphoSitePlus" id="Q9JKW0"/>
<dbReference type="SwissPalm" id="Q9JKW0"/>
<dbReference type="jPOST" id="Q9JKW0"/>
<dbReference type="PaxDb" id="10090-ENSMUSP00000032888"/>
<dbReference type="ProteomicsDB" id="283251"/>
<dbReference type="Pumba" id="Q9JKW0"/>
<dbReference type="Antibodypedia" id="11964">
    <property type="antibodies" value="282 antibodies from 32 providers"/>
</dbReference>
<dbReference type="DNASU" id="54208"/>
<dbReference type="Ensembl" id="ENSMUST00000032888.10">
    <property type="protein sequence ID" value="ENSMUSP00000032888.8"/>
    <property type="gene ID" value="ENSMUSG00000030654.10"/>
</dbReference>
<dbReference type="GeneID" id="54208"/>
<dbReference type="KEGG" id="mmu:54208"/>
<dbReference type="UCSC" id="uc009jjo.2">
    <property type="organism name" value="mouse"/>
</dbReference>
<dbReference type="AGR" id="MGI:1858943"/>
<dbReference type="CTD" id="23204"/>
<dbReference type="MGI" id="MGI:1858943">
    <property type="gene designation" value="Arl6ip1"/>
</dbReference>
<dbReference type="VEuPathDB" id="HostDB:ENSMUSG00000030654"/>
<dbReference type="eggNOG" id="ENOG502QTTI">
    <property type="taxonomic scope" value="Eukaryota"/>
</dbReference>
<dbReference type="GeneTree" id="ENSGT00940000154937"/>
<dbReference type="HOGENOM" id="CLU_100749_0_0_1"/>
<dbReference type="InParanoid" id="Q9JKW0"/>
<dbReference type="OMA" id="WTGQKEK"/>
<dbReference type="OrthoDB" id="6416122at2759"/>
<dbReference type="PhylomeDB" id="Q9JKW0"/>
<dbReference type="TreeFam" id="TF105477"/>
<dbReference type="BioGRID-ORCS" id="54208">
    <property type="hits" value="3 hits in 78 CRISPR screens"/>
</dbReference>
<dbReference type="ChiTaRS" id="Arl6ip1">
    <property type="organism name" value="mouse"/>
</dbReference>
<dbReference type="PRO" id="PR:Q9JKW0"/>
<dbReference type="Proteomes" id="UP000000589">
    <property type="component" value="Chromosome 7"/>
</dbReference>
<dbReference type="RNAct" id="Q9JKW0">
    <property type="molecule type" value="protein"/>
</dbReference>
<dbReference type="Bgee" id="ENSMUSG00000030654">
    <property type="expression patterns" value="Expressed in pigmented layer of retina and 263 other cell types or tissues"/>
</dbReference>
<dbReference type="ExpressionAtlas" id="Q9JKW0">
    <property type="expression patterns" value="baseline and differential"/>
</dbReference>
<dbReference type="GO" id="GO:0005737">
    <property type="term" value="C:cytoplasm"/>
    <property type="evidence" value="ECO:0000314"/>
    <property type="project" value="MGI"/>
</dbReference>
<dbReference type="GO" id="GO:0005829">
    <property type="term" value="C:cytosol"/>
    <property type="evidence" value="ECO:0000314"/>
    <property type="project" value="MGI"/>
</dbReference>
<dbReference type="GO" id="GO:0005783">
    <property type="term" value="C:endoplasmic reticulum"/>
    <property type="evidence" value="ECO:0000314"/>
    <property type="project" value="UniProtKB"/>
</dbReference>
<dbReference type="GO" id="GO:0005789">
    <property type="term" value="C:endoplasmic reticulum membrane"/>
    <property type="evidence" value="ECO:0000250"/>
    <property type="project" value="UniProtKB"/>
</dbReference>
<dbReference type="GO" id="GO:0071782">
    <property type="term" value="C:endoplasmic reticulum tubular network"/>
    <property type="evidence" value="ECO:0007669"/>
    <property type="project" value="Ensembl"/>
</dbReference>
<dbReference type="GO" id="GO:0016020">
    <property type="term" value="C:membrane"/>
    <property type="evidence" value="ECO:0000314"/>
    <property type="project" value="MGI"/>
</dbReference>
<dbReference type="GO" id="GO:0005784">
    <property type="term" value="C:Sec61 translocon complex"/>
    <property type="evidence" value="ECO:0000314"/>
    <property type="project" value="MGI"/>
</dbReference>
<dbReference type="GO" id="GO:0042802">
    <property type="term" value="F:identical protein binding"/>
    <property type="evidence" value="ECO:0007669"/>
    <property type="project" value="Ensembl"/>
</dbReference>
<dbReference type="GO" id="GO:0006915">
    <property type="term" value="P:apoptotic process"/>
    <property type="evidence" value="ECO:0007669"/>
    <property type="project" value="UniProtKB-KW"/>
</dbReference>
<dbReference type="GO" id="GO:0006613">
    <property type="term" value="P:cotranslational protein targeting to membrane"/>
    <property type="evidence" value="ECO:0000314"/>
    <property type="project" value="MGI"/>
</dbReference>
<dbReference type="GO" id="GO:0071787">
    <property type="term" value="P:endoplasmic reticulum tubular network formation"/>
    <property type="evidence" value="ECO:0000250"/>
    <property type="project" value="UniProtKB"/>
</dbReference>
<dbReference type="GO" id="GO:1990809">
    <property type="term" value="P:endoplasmic reticulum tubular network membrane organization"/>
    <property type="evidence" value="ECO:0000250"/>
    <property type="project" value="UniProtKB"/>
</dbReference>
<dbReference type="GO" id="GO:0043066">
    <property type="term" value="P:negative regulation of apoptotic process"/>
    <property type="evidence" value="ECO:0000250"/>
    <property type="project" value="UniProtKB"/>
</dbReference>
<dbReference type="GO" id="GO:0002038">
    <property type="term" value="P:positive regulation of L-glutamate import across plasma membrane"/>
    <property type="evidence" value="ECO:0000314"/>
    <property type="project" value="UniProtKB"/>
</dbReference>
<dbReference type="GO" id="GO:1903371">
    <property type="term" value="P:regulation of endoplasmic reticulum tubular network organization"/>
    <property type="evidence" value="ECO:0007669"/>
    <property type="project" value="Ensembl"/>
</dbReference>
<dbReference type="CDD" id="cd22559">
    <property type="entry name" value="Arl6IP1"/>
    <property type="match status" value="1"/>
</dbReference>
<dbReference type="InterPro" id="IPR052114">
    <property type="entry name" value="ER_autophagy_membrane_reg"/>
</dbReference>
<dbReference type="PANTHER" id="PTHR20952:SF0">
    <property type="entry name" value="ADP-RIBOSYLATION FACTOR-LIKE PROTEIN 6-INTERACTING PROTEIN 1"/>
    <property type="match status" value="1"/>
</dbReference>
<dbReference type="PANTHER" id="PTHR20952">
    <property type="entry name" value="ADP-RIBOSYLATION-LIKE FACTOR 6-INTERACTING PROTEIN"/>
    <property type="match status" value="1"/>
</dbReference>
<dbReference type="Pfam" id="PF24456">
    <property type="entry name" value="RHD_RETREG1-3"/>
    <property type="match status" value="1"/>
</dbReference>
<proteinExistence type="evidence at protein level"/>
<keyword id="KW-0053">Apoptosis</keyword>
<keyword id="KW-0256">Endoplasmic reticulum</keyword>
<keyword id="KW-0472">Membrane</keyword>
<keyword id="KW-1185">Reference proteome</keyword>
<keyword id="KW-0812">Transmembrane</keyword>
<keyword id="KW-1133">Transmembrane helix</keyword>
<reference key="1">
    <citation type="journal article" date="1999" name="FEBS Lett.">
        <title>A novel ADP-ribosylation like factor (ARL-6), interacts with the protein-conducting channel SEC61beta subunit.</title>
        <authorList>
            <person name="Ingley E."/>
            <person name="Williams J.H."/>
            <person name="Walker C.E."/>
            <person name="Tsai S."/>
            <person name="Colley S."/>
            <person name="Sayer M.S."/>
            <person name="Tilbrook P.A."/>
            <person name="Sarna M."/>
            <person name="Beaumont J.G."/>
            <person name="Klinken S.P."/>
        </authorList>
    </citation>
    <scope>NUCLEOTIDE SEQUENCE [MRNA]</scope>
    <scope>INTERACTION WITH ARL6</scope>
</reference>
<reference key="2">
    <citation type="submission" date="1999-07" db="EMBL/GenBank/DDBJ databases">
        <title>A novel gene cloned from mouse thymic stromal cell line.</title>
        <authorList>
            <person name="Xie L.P."/>
            <person name="Chen W.F."/>
        </authorList>
    </citation>
    <scope>NUCLEOTIDE SEQUENCE [MRNA]</scope>
    <source>
        <strain>BALB/cJ</strain>
        <tissue>Thymus</tissue>
    </source>
</reference>
<reference key="3">
    <citation type="journal article" date="2000" name="Genomics">
        <title>Characterization, chromosomal localization, and expression during hematopoietic differentiation of the gene encoding Arl6ip, ADP-ribosylation-like factor-6 interacting protein (ARL6).</title>
        <authorList>
            <person name="Pettersson M."/>
            <person name="Bessonova M."/>
            <person name="Gu H.F."/>
            <person name="Groop L.C."/>
            <person name="Jonsson J.I."/>
        </authorList>
    </citation>
    <scope>NUCLEOTIDE SEQUENCE [MRNA]</scope>
    <scope>SUBCELLULAR LOCATION</scope>
    <scope>TISSUE SPECIFICITY</scope>
</reference>
<reference key="4">
    <citation type="journal article" date="2004" name="Genome Res.">
        <title>The status, quality, and expansion of the NIH full-length cDNA project: the Mammalian Gene Collection (MGC).</title>
        <authorList>
            <consortium name="The MGC Project Team"/>
        </authorList>
    </citation>
    <scope>NUCLEOTIDE SEQUENCE [LARGE SCALE MRNA]</scope>
    <source>
        <strain>FVB/N</strain>
        <tissue>Mammary gland</tissue>
    </source>
</reference>
<reference key="5">
    <citation type="journal article" date="2008" name="J. Biol. Chem.">
        <title>Modulation of the neural glutamate transporter EAAC1 by the addicsin-interacting protein ARL6IP1.</title>
        <authorList>
            <person name="Akiduki S."/>
            <person name="Ikemoto M.J."/>
        </authorList>
    </citation>
    <scope>NUCLEOTIDE SEQUENCE [MRNA] OF 1-59</scope>
    <scope>FUNCTION</scope>
    <scope>INTERACTION WITH ARL6IP5</scope>
    <scope>SUBCELLULAR LOCATION</scope>
    <scope>TISSUE SPECIFICITY</scope>
</reference>
<name>AR6P1_MOUSE</name>
<protein>
    <recommendedName>
        <fullName>ADP-ribosylation factor-like protein 6-interacting protein 1</fullName>
        <shortName>ARL-6-interacting protein 1</shortName>
        <shortName>Aip-1</shortName>
    </recommendedName>
    <alternativeName>
        <fullName>Protein TBX2</fullName>
    </alternativeName>
</protein>
<accession>Q9JKW0</accession>
<accession>Q9JLI9</accession>
<accession>Q9WUG3</accession>
<sequence>MAEGDNRSSNLLAVETASLEEQLQGWGEVMLMADKVLRWERAWFPPAIMGVVSLLFLIIYYLDPSVLSGVSCFVMFLCLADYLVPILAPRIFGSNKWTTEQQQRFHEICSNLVKTRRRAVGWWKRLFSLKEEKPKMYFMTMIISLAAVAWVGQQVHNLLLTYLIVTFVLLLPGLNQHGIILKYIGMAKREINKLLKQKEKKNE</sequence>
<organism>
    <name type="scientific">Mus musculus</name>
    <name type="common">Mouse</name>
    <dbReference type="NCBI Taxonomy" id="10090"/>
    <lineage>
        <taxon>Eukaryota</taxon>
        <taxon>Metazoa</taxon>
        <taxon>Chordata</taxon>
        <taxon>Craniata</taxon>
        <taxon>Vertebrata</taxon>
        <taxon>Euteleostomi</taxon>
        <taxon>Mammalia</taxon>
        <taxon>Eutheria</taxon>
        <taxon>Euarchontoglires</taxon>
        <taxon>Glires</taxon>
        <taxon>Rodentia</taxon>
        <taxon>Myomorpha</taxon>
        <taxon>Muroidea</taxon>
        <taxon>Muridae</taxon>
        <taxon>Murinae</taxon>
        <taxon>Mus</taxon>
        <taxon>Mus</taxon>
    </lineage>
</organism>
<feature type="chain" id="PRO_0000064656" description="ADP-ribosylation factor-like protein 6-interacting protein 1">
    <location>
        <begin position="1"/>
        <end position="203"/>
    </location>
</feature>
<feature type="topological domain" description="Cytoplasmic" evidence="2">
    <location>
        <begin position="1"/>
        <end position="41"/>
    </location>
</feature>
<feature type="transmembrane region" description="Helical" evidence="2">
    <location>
        <begin position="42"/>
        <end position="62"/>
    </location>
</feature>
<feature type="topological domain" description="Lumenal" evidence="2">
    <location>
        <begin position="63"/>
        <end position="65"/>
    </location>
</feature>
<feature type="transmembrane region" description="Helical" evidence="2">
    <location>
        <begin position="66"/>
        <end position="86"/>
    </location>
</feature>
<feature type="topological domain" description="Cytoplasmic" evidence="2">
    <location>
        <begin position="87"/>
        <end position="133"/>
    </location>
</feature>
<feature type="transmembrane region" description="Helical" evidence="2">
    <location>
        <begin position="134"/>
        <end position="175"/>
    </location>
</feature>
<feature type="topological domain" description="Lumenal" evidence="2">
    <location>
        <begin position="176"/>
        <end position="203"/>
    </location>
</feature>
<comment type="function">
    <text evidence="1 5">Positively regulates SLC1A1/EAAC1-mediated glutamate transport by increasing its affinity for glutamate in a PKC activity-dependent manner. Promotes the catalytic efficiency of SLC1A1/EAAC1 probably by reducing its interaction with ARL6IP5, a negative regulator of SLC1A1/EAAC1-mediated glutamate transport (PubMed:18684713). Plays a role in the formation and stabilization of endoplasmic reticulum tubules. Negatively regulates apoptosis, possibly by modulating the activity of caspase-9 (CASP9). Inhibits cleavage of CASP9-dependent substrates and downstream markers of apoptosis but not CASP9 itself. May be involved in protein transport, membrane trafficking, or cell signaling during hematopoietic maturation (By similarity).</text>
</comment>
<comment type="subunit">
    <text evidence="1 3 5">Homooligomer (By similarity). Heterodimer with ARL6IP5 (PubMed:18684713). Interacts with ARL6 (PubMed:10508919). Interacts with TMEM33. Interacts with ATL1 (By similarity).</text>
</comment>
<comment type="subcellular location">
    <subcellularLocation>
        <location evidence="1">Endomembrane system</location>
        <topology evidence="2">Multi-pass membrane protein</topology>
    </subcellularLocation>
    <subcellularLocation>
        <location evidence="1">Endoplasmic reticulum membrane</location>
        <topology evidence="2">Multi-pass membrane protein</topology>
    </subcellularLocation>
    <subcellularLocation>
        <location evidence="5">Endoplasmic reticulum</location>
    </subcellularLocation>
    <text evidence="1">Predominantly localized to intracytoplasmic membranes. Preferentially localizes at the ER tubules and the edge of the ER sheets, both of which are characterized by a high membrane curvature.</text>
</comment>
<comment type="tissue specificity">
    <text evidence="4 5">Expressed in the cerebral cortex, cerebellum, hippocampus, olfactory bulbs, medulla oblongate and limbic system (at protein level). Ubiquitous (PubMed:18684713). Expressed in all hematopoietic cell lineages, with highest levels in early myeloid progenitor cells.</text>
</comment>
<comment type="domain">
    <text evidence="1">The transmembrane domains are required for its ability to shape the endoplasmic reticulum membrane into tubules.</text>
</comment>
<comment type="similarity">
    <text evidence="6">Belongs to the ARL6ip family.</text>
</comment>
<comment type="sequence caution" evidence="6">
    <conflict type="frameshift">
        <sequence resource="EMBL-CDS" id="AAD33046"/>
    </conflict>
</comment>
<comment type="sequence caution" evidence="6">
    <conflict type="erroneous initiation">
        <sequence resource="EMBL-CDS" id="AAF27313"/>
    </conflict>
</comment>